<accession>Q8DV10</accession>
<protein>
    <recommendedName>
        <fullName evidence="1">Phosphoenolpyruvate carboxylase</fullName>
        <shortName evidence="1">PEPC</shortName>
        <shortName evidence="1">PEPCase</shortName>
        <ecNumber evidence="1">4.1.1.31</ecNumber>
    </recommendedName>
</protein>
<organism>
    <name type="scientific">Streptococcus mutans serotype c (strain ATCC 700610 / UA159)</name>
    <dbReference type="NCBI Taxonomy" id="210007"/>
    <lineage>
        <taxon>Bacteria</taxon>
        <taxon>Bacillati</taxon>
        <taxon>Bacillota</taxon>
        <taxon>Bacilli</taxon>
        <taxon>Lactobacillales</taxon>
        <taxon>Streptococcaceae</taxon>
        <taxon>Streptococcus</taxon>
    </lineage>
</organism>
<evidence type="ECO:0000255" key="1">
    <source>
        <dbReference type="HAMAP-Rule" id="MF_00595"/>
    </source>
</evidence>
<comment type="function">
    <text evidence="1">Forms oxaloacetate, a four-carbon dicarboxylic acid source for the tricarboxylic acid cycle.</text>
</comment>
<comment type="catalytic activity">
    <reaction evidence="1">
        <text>oxaloacetate + phosphate = phosphoenolpyruvate + hydrogencarbonate</text>
        <dbReference type="Rhea" id="RHEA:28370"/>
        <dbReference type="ChEBI" id="CHEBI:16452"/>
        <dbReference type="ChEBI" id="CHEBI:17544"/>
        <dbReference type="ChEBI" id="CHEBI:43474"/>
        <dbReference type="ChEBI" id="CHEBI:58702"/>
        <dbReference type="EC" id="4.1.1.31"/>
    </reaction>
</comment>
<comment type="cofactor">
    <cofactor evidence="1">
        <name>Mg(2+)</name>
        <dbReference type="ChEBI" id="CHEBI:18420"/>
    </cofactor>
</comment>
<comment type="similarity">
    <text evidence="1">Belongs to the PEPCase type 1 family.</text>
</comment>
<keyword id="KW-0120">Carbon dioxide fixation</keyword>
<keyword id="KW-0456">Lyase</keyword>
<keyword id="KW-0460">Magnesium</keyword>
<keyword id="KW-1185">Reference proteome</keyword>
<dbReference type="EC" id="4.1.1.31" evidence="1"/>
<dbReference type="EMBL" id="AE014133">
    <property type="protein sequence ID" value="AAN58441.1"/>
    <property type="molecule type" value="Genomic_DNA"/>
</dbReference>
<dbReference type="RefSeq" id="NP_721135.1">
    <property type="nucleotide sequence ID" value="NC_004350.2"/>
</dbReference>
<dbReference type="RefSeq" id="WP_002263316.1">
    <property type="nucleotide sequence ID" value="NC_004350.2"/>
</dbReference>
<dbReference type="SMR" id="Q8DV10"/>
<dbReference type="STRING" id="210007.SMU_712"/>
<dbReference type="KEGG" id="smu:SMU_712"/>
<dbReference type="PATRIC" id="fig|210007.7.peg.631"/>
<dbReference type="eggNOG" id="COG2352">
    <property type="taxonomic scope" value="Bacteria"/>
</dbReference>
<dbReference type="HOGENOM" id="CLU_006557_2_0_9"/>
<dbReference type="OrthoDB" id="9768133at2"/>
<dbReference type="PhylomeDB" id="Q8DV10"/>
<dbReference type="Proteomes" id="UP000002512">
    <property type="component" value="Chromosome"/>
</dbReference>
<dbReference type="GO" id="GO:0005829">
    <property type="term" value="C:cytosol"/>
    <property type="evidence" value="ECO:0007669"/>
    <property type="project" value="TreeGrafter"/>
</dbReference>
<dbReference type="GO" id="GO:0000287">
    <property type="term" value="F:magnesium ion binding"/>
    <property type="evidence" value="ECO:0007669"/>
    <property type="project" value="UniProtKB-UniRule"/>
</dbReference>
<dbReference type="GO" id="GO:0008964">
    <property type="term" value="F:phosphoenolpyruvate carboxylase activity"/>
    <property type="evidence" value="ECO:0007669"/>
    <property type="project" value="UniProtKB-UniRule"/>
</dbReference>
<dbReference type="GO" id="GO:0015977">
    <property type="term" value="P:carbon fixation"/>
    <property type="evidence" value="ECO:0007669"/>
    <property type="project" value="UniProtKB-UniRule"/>
</dbReference>
<dbReference type="GO" id="GO:0006107">
    <property type="term" value="P:oxaloacetate metabolic process"/>
    <property type="evidence" value="ECO:0007669"/>
    <property type="project" value="UniProtKB-UniRule"/>
</dbReference>
<dbReference type="GO" id="GO:0006099">
    <property type="term" value="P:tricarboxylic acid cycle"/>
    <property type="evidence" value="ECO:0007669"/>
    <property type="project" value="InterPro"/>
</dbReference>
<dbReference type="Gene3D" id="1.20.1440.90">
    <property type="entry name" value="Phosphoenolpyruvate/pyruvate domain"/>
    <property type="match status" value="1"/>
</dbReference>
<dbReference type="HAMAP" id="MF_00595">
    <property type="entry name" value="PEPcase_type1"/>
    <property type="match status" value="1"/>
</dbReference>
<dbReference type="InterPro" id="IPR021135">
    <property type="entry name" value="PEP_COase"/>
</dbReference>
<dbReference type="InterPro" id="IPR022805">
    <property type="entry name" value="PEP_COase_bac/pln-type"/>
</dbReference>
<dbReference type="InterPro" id="IPR018129">
    <property type="entry name" value="PEP_COase_Lys_AS"/>
</dbReference>
<dbReference type="InterPro" id="IPR033129">
    <property type="entry name" value="PEPCASE_His_AS"/>
</dbReference>
<dbReference type="InterPro" id="IPR015813">
    <property type="entry name" value="Pyrv/PenolPyrv_kinase-like_dom"/>
</dbReference>
<dbReference type="NCBIfam" id="NF000584">
    <property type="entry name" value="PRK00009.1"/>
    <property type="match status" value="1"/>
</dbReference>
<dbReference type="PANTHER" id="PTHR30523">
    <property type="entry name" value="PHOSPHOENOLPYRUVATE CARBOXYLASE"/>
    <property type="match status" value="1"/>
</dbReference>
<dbReference type="PANTHER" id="PTHR30523:SF6">
    <property type="entry name" value="PHOSPHOENOLPYRUVATE CARBOXYLASE"/>
    <property type="match status" value="1"/>
</dbReference>
<dbReference type="Pfam" id="PF00311">
    <property type="entry name" value="PEPcase"/>
    <property type="match status" value="1"/>
</dbReference>
<dbReference type="PRINTS" id="PR00150">
    <property type="entry name" value="PEPCARBXLASE"/>
</dbReference>
<dbReference type="SUPFAM" id="SSF51621">
    <property type="entry name" value="Phosphoenolpyruvate/pyruvate domain"/>
    <property type="match status" value="1"/>
</dbReference>
<dbReference type="PROSITE" id="PS00781">
    <property type="entry name" value="PEPCASE_1"/>
    <property type="match status" value="1"/>
</dbReference>
<dbReference type="PROSITE" id="PS00393">
    <property type="entry name" value="PEPCASE_2"/>
    <property type="match status" value="1"/>
</dbReference>
<gene>
    <name evidence="1" type="primary">ppc</name>
    <name type="synonym">capP</name>
    <name type="ordered locus">SMU_712</name>
</gene>
<reference key="1">
    <citation type="journal article" date="2002" name="Proc. Natl. Acad. Sci. U.S.A.">
        <title>Genome sequence of Streptococcus mutans UA159, a cariogenic dental pathogen.</title>
        <authorList>
            <person name="Ajdic D.J."/>
            <person name="McShan W.M."/>
            <person name="McLaughlin R.E."/>
            <person name="Savic G."/>
            <person name="Chang J."/>
            <person name="Carson M.B."/>
            <person name="Primeaux C."/>
            <person name="Tian R."/>
            <person name="Kenton S."/>
            <person name="Jia H.G."/>
            <person name="Lin S.P."/>
            <person name="Qian Y."/>
            <person name="Li S."/>
            <person name="Zhu H."/>
            <person name="Najar F.Z."/>
            <person name="Lai H."/>
            <person name="White J."/>
            <person name="Roe B.A."/>
            <person name="Ferretti J.J."/>
        </authorList>
    </citation>
    <scope>NUCLEOTIDE SEQUENCE [LARGE SCALE GENOMIC DNA]</scope>
    <source>
        <strain>ATCC 700610 / UA159</strain>
    </source>
</reference>
<name>CAPP_STRMU</name>
<sequence>MTINKLESRNDKEAIAEEITILTKLLDDATKTMVGSASFDKITLFKKLSIEEKHQELEREIEQLTNEEMVVVSRYFSILPLLINISEDVNLAYEINYQNNNDIDYLGKLSATIELVSSQKNAQEILENVNVVPVLTAHPTQVQRKTMLDLTNHIHELLRKYRDVKAGSINKQKWYDDMRRYVELIMQTDIIREKKLKVTNEITNVMEYYNSSLIKGVTKLITEYKHLSHQKGFDLGNAKPITMGMWIGGDRDGNPFVTAETLKISALVQNEVILNYYIDKVSDLYRTFSLSTSLSTISNAVKEMADRSTDVSIYREKEPYRKAFHYIQSRLQETLIYLKNNHLEELESEDSAQILPYQSAQEFRNDLQLIKDSLLENNGSAFITGDLTELLQAVDVFGFFLASIDMRQDSSVHETCVAELLASANIVANYSDLPEEEKIAILLKELTEDPRILSATHVEKSEILQKELAIFKTARKLKDALGEDVIKQHIISHTESISDMFELAIMLKEVGLVDTDKARVQIVPLFETIEDLDNSREIMRQYLNYDIVKKWIAANHNYQEIMLGYSDSNKDGGYLSSGWALYKAQNELTEIGYDNGVKITFFHGRGGTVGRGGGPSYEAITSQPFGSIKDRIRLTEQGEVIGNKYGNKDVAYYNLEMLVSATLDRMVTRRIVNSDNLVNYRLIMDEIVADSNLIYRDLVFGNEHFYDYFFAASPIREVSSLNIGSRPAARKTITEISGLRAIPWVFSWSQNRIMFPGWYGVGSAFKHFIDKDEKNLTKLQEMYQSWPFFHSLLSNVDMVLSKSNMNIAFEYAKLCQDEETKEVFATILDEWQLTKNVILAIESHKQLLEDNSYLKASLDYRLPYFNVLNYIQIELIKRQRRGELGENLENLIHITINGVATGLRNSG</sequence>
<proteinExistence type="inferred from homology"/>
<feature type="chain" id="PRO_0000166629" description="Phosphoenolpyruvate carboxylase">
    <location>
        <begin position="1"/>
        <end position="907"/>
    </location>
</feature>
<feature type="active site" evidence="1">
    <location>
        <position position="138"/>
    </location>
</feature>
<feature type="active site" evidence="1">
    <location>
        <position position="570"/>
    </location>
</feature>